<reference key="1">
    <citation type="journal article" date="2001" name="Nature">
        <title>Genome sequence of enterohaemorrhagic Escherichia coli O157:H7.</title>
        <authorList>
            <person name="Perna N.T."/>
            <person name="Plunkett G. III"/>
            <person name="Burland V."/>
            <person name="Mau B."/>
            <person name="Glasner J.D."/>
            <person name="Rose D.J."/>
            <person name="Mayhew G.F."/>
            <person name="Evans P.S."/>
            <person name="Gregor J."/>
            <person name="Kirkpatrick H.A."/>
            <person name="Posfai G."/>
            <person name="Hackett J."/>
            <person name="Klink S."/>
            <person name="Boutin A."/>
            <person name="Shao Y."/>
            <person name="Miller L."/>
            <person name="Grotbeck E.J."/>
            <person name="Davis N.W."/>
            <person name="Lim A."/>
            <person name="Dimalanta E.T."/>
            <person name="Potamousis K."/>
            <person name="Apodaca J."/>
            <person name="Anantharaman T.S."/>
            <person name="Lin J."/>
            <person name="Yen G."/>
            <person name="Schwartz D.C."/>
            <person name="Welch R.A."/>
            <person name="Blattner F.R."/>
        </authorList>
    </citation>
    <scope>NUCLEOTIDE SEQUENCE [LARGE SCALE GENOMIC DNA]</scope>
    <source>
        <strain>O157:H7 / EDL933 / ATCC 700927 / EHEC</strain>
    </source>
</reference>
<reference key="2">
    <citation type="journal article" date="2001" name="DNA Res.">
        <title>Complete genome sequence of enterohemorrhagic Escherichia coli O157:H7 and genomic comparison with a laboratory strain K-12.</title>
        <authorList>
            <person name="Hayashi T."/>
            <person name="Makino K."/>
            <person name="Ohnishi M."/>
            <person name="Kurokawa K."/>
            <person name="Ishii K."/>
            <person name="Yokoyama K."/>
            <person name="Han C.-G."/>
            <person name="Ohtsubo E."/>
            <person name="Nakayama K."/>
            <person name="Murata T."/>
            <person name="Tanaka M."/>
            <person name="Tobe T."/>
            <person name="Iida T."/>
            <person name="Takami H."/>
            <person name="Honda T."/>
            <person name="Sasakawa C."/>
            <person name="Ogasawara N."/>
            <person name="Yasunaga T."/>
            <person name="Kuhara S."/>
            <person name="Shiba T."/>
            <person name="Hattori M."/>
            <person name="Shinagawa H."/>
        </authorList>
    </citation>
    <scope>NUCLEOTIDE SEQUENCE [LARGE SCALE GENOMIC DNA]</scope>
    <source>
        <strain>O157:H7 / Sakai / RIMD 0509952 / EHEC</strain>
    </source>
</reference>
<proteinExistence type="inferred from homology"/>
<protein>
    <recommendedName>
        <fullName>Hemolysin expression-modulating protein Hha</fullName>
    </recommendedName>
</protein>
<sequence length="72" mass="8628">MSEKPLTKTDYLMRLRRCQTIDTLERVIEKNKYELSDNELAVFYSAADHRLAELTMNKLYDKIPSSVWKFIR</sequence>
<dbReference type="EMBL" id="AE005174">
    <property type="protein sequence ID" value="AAG54809.1"/>
    <property type="molecule type" value="Genomic_DNA"/>
</dbReference>
<dbReference type="EMBL" id="BA000007">
    <property type="protein sequence ID" value="BAB33936.1"/>
    <property type="molecule type" value="Genomic_DNA"/>
</dbReference>
<dbReference type="PIR" id="A99693">
    <property type="entry name" value="A99693"/>
</dbReference>
<dbReference type="PIR" id="E85543">
    <property type="entry name" value="E85543"/>
</dbReference>
<dbReference type="RefSeq" id="NP_308540.1">
    <property type="nucleotide sequence ID" value="NC_002695.1"/>
</dbReference>
<dbReference type="RefSeq" id="WP_001291435.1">
    <property type="nucleotide sequence ID" value="NZ_VOAI01000005.1"/>
</dbReference>
<dbReference type="BMRB" id="P0ACE5"/>
<dbReference type="SMR" id="P0ACE5"/>
<dbReference type="STRING" id="155864.Z0573"/>
<dbReference type="GeneID" id="914617"/>
<dbReference type="KEGG" id="ece:Z0573"/>
<dbReference type="KEGG" id="ecs:ECs_0513"/>
<dbReference type="PATRIC" id="fig|386585.9.peg.618"/>
<dbReference type="eggNOG" id="ENOG5032SGA">
    <property type="taxonomic scope" value="Bacteria"/>
</dbReference>
<dbReference type="HOGENOM" id="CLU_190629_0_0_6"/>
<dbReference type="OMA" id="RRCQSID"/>
<dbReference type="Proteomes" id="UP000000558">
    <property type="component" value="Chromosome"/>
</dbReference>
<dbReference type="Proteomes" id="UP000002519">
    <property type="component" value="Chromosome"/>
</dbReference>
<dbReference type="GO" id="GO:0003677">
    <property type="term" value="F:DNA binding"/>
    <property type="evidence" value="ECO:0007669"/>
    <property type="project" value="UniProtKB-KW"/>
</dbReference>
<dbReference type="GO" id="GO:1900191">
    <property type="term" value="P:negative regulation of single-species biofilm formation"/>
    <property type="evidence" value="ECO:0000315"/>
    <property type="project" value="CACAO"/>
</dbReference>
<dbReference type="GO" id="GO:2000147">
    <property type="term" value="P:positive regulation of cell motility"/>
    <property type="evidence" value="ECO:0000315"/>
    <property type="project" value="CACAO"/>
</dbReference>
<dbReference type="FunFam" id="1.20.1280.40:FF:000001">
    <property type="entry name" value="Hemolysin expression modulator Hha"/>
    <property type="match status" value="1"/>
</dbReference>
<dbReference type="Gene3D" id="1.20.1280.40">
    <property type="entry name" value="HHA"/>
    <property type="match status" value="1"/>
</dbReference>
<dbReference type="InterPro" id="IPR007985">
    <property type="entry name" value="Hemolysn_expr_modulating_HHA"/>
</dbReference>
<dbReference type="InterPro" id="IPR036666">
    <property type="entry name" value="HHA_sf"/>
</dbReference>
<dbReference type="NCBIfam" id="NF008191">
    <property type="entry name" value="PRK10945.1"/>
    <property type="match status" value="1"/>
</dbReference>
<dbReference type="Pfam" id="PF05321">
    <property type="entry name" value="HHA"/>
    <property type="match status" value="1"/>
</dbReference>
<dbReference type="SUPFAM" id="SSF68989">
    <property type="entry name" value="Hemolysin expression modulating protein HHA"/>
    <property type="match status" value="1"/>
</dbReference>
<gene>
    <name type="primary">hha</name>
    <name type="ordered locus">Z0573</name>
    <name type="ordered locus">ECs0513</name>
</gene>
<accession>P0ACE5</accession>
<accession>P23870</accession>
<accession>P77120</accession>
<feature type="chain" id="PRO_0000201728" description="Hemolysin expression-modulating protein Hha">
    <location>
        <begin position="1"/>
        <end position="72"/>
    </location>
</feature>
<feature type="site" description="Interacts with H-NS" evidence="1">
    <location>
        <position position="25"/>
    </location>
</feature>
<feature type="site" description="Interacts with H-NS" evidence="1">
    <location>
        <position position="48"/>
    </location>
</feature>
<organism>
    <name type="scientific">Escherichia coli O157:H7</name>
    <dbReference type="NCBI Taxonomy" id="83334"/>
    <lineage>
        <taxon>Bacteria</taxon>
        <taxon>Pseudomonadati</taxon>
        <taxon>Pseudomonadota</taxon>
        <taxon>Gammaproteobacteria</taxon>
        <taxon>Enterobacterales</taxon>
        <taxon>Enterobacteriaceae</taxon>
        <taxon>Escherichia</taxon>
    </lineage>
</organism>
<name>HHA_ECO57</name>
<evidence type="ECO:0000250" key="1"/>
<evidence type="ECO:0000250" key="2">
    <source>
        <dbReference type="UniProtKB" id="P0ACE3"/>
    </source>
</evidence>
<evidence type="ECO:0000305" key="3"/>
<comment type="function">
    <text evidence="2">Down-regulates hemolysin expression, in complex with H-NS, and can also stimulate transposition events in vivo. Modifies the set of genes regulated by H-NS; Hha and Cnu (YdgT) increase the number of genes DNA bound by H-NS/StpA and may also modulate the oligomerization of the H-NS/StpA-complex. Binds DNA and influences DNA topology in response to environmental stimuli. Decreases biofilm formation (By similarity).</text>
</comment>
<comment type="subunit">
    <text evidence="2">Forms a heterotrimeric complex with the H-NS dimer.</text>
</comment>
<comment type="similarity">
    <text evidence="3">Belongs to the Hha/YmoA/Cnu family.</text>
</comment>
<keyword id="KW-0238">DNA-binding</keyword>
<keyword id="KW-1185">Reference proteome</keyword>
<keyword id="KW-0678">Repressor</keyword>
<keyword id="KW-0804">Transcription</keyword>
<keyword id="KW-0805">Transcription regulation</keyword>